<keyword id="KW-0002">3D-structure</keyword>
<keyword id="KW-0007">Acetylation</keyword>
<keyword id="KW-0025">Alternative splicing</keyword>
<keyword id="KW-0067">ATP-binding</keyword>
<keyword id="KW-0963">Cytoplasm</keyword>
<keyword id="KW-0903">Direct protein sequencing</keyword>
<keyword id="KW-0547">Nucleotide-binding</keyword>
<keyword id="KW-0539">Nucleus</keyword>
<keyword id="KW-0597">Phosphoprotein</keyword>
<keyword id="KW-0647">Proteasome</keyword>
<keyword id="KW-1267">Proteomics identification</keyword>
<keyword id="KW-1185">Reference proteome</keyword>
<organism>
    <name type="scientific">Homo sapiens</name>
    <name type="common">Human</name>
    <dbReference type="NCBI Taxonomy" id="9606"/>
    <lineage>
        <taxon>Eukaryota</taxon>
        <taxon>Metazoa</taxon>
        <taxon>Chordata</taxon>
        <taxon>Craniata</taxon>
        <taxon>Vertebrata</taxon>
        <taxon>Euteleostomi</taxon>
        <taxon>Mammalia</taxon>
        <taxon>Eutheria</taxon>
        <taxon>Euarchontoglires</taxon>
        <taxon>Primates</taxon>
        <taxon>Haplorrhini</taxon>
        <taxon>Catarrhini</taxon>
        <taxon>Hominidae</taxon>
        <taxon>Homo</taxon>
    </lineage>
</organism>
<dbReference type="EMBL" id="AF038965">
    <property type="protein sequence ID" value="AAC26843.1"/>
    <property type="molecule type" value="mRNA"/>
</dbReference>
<dbReference type="EMBL" id="U27515">
    <property type="protein sequence ID" value="AAC99817.1"/>
    <property type="molecule type" value="mRNA"/>
</dbReference>
<dbReference type="EMBL" id="AF020736">
    <property type="protein sequence ID" value="AAC32612.1"/>
    <property type="molecule type" value="mRNA"/>
</dbReference>
<dbReference type="EMBL" id="BT007232">
    <property type="protein sequence ID" value="AAP35896.1"/>
    <property type="molecule type" value="mRNA"/>
</dbReference>
<dbReference type="EMBL" id="AC007842">
    <property type="protein sequence ID" value="AAD39267.1"/>
    <property type="molecule type" value="Genomic_DNA"/>
</dbReference>
<dbReference type="EMBL" id="BC000343">
    <property type="protein sequence ID" value="AAH00343.1"/>
    <property type="molecule type" value="mRNA"/>
</dbReference>
<dbReference type="EMBL" id="BC010396">
    <property type="protein sequence ID" value="AAH10396.1"/>
    <property type="molecule type" value="mRNA"/>
</dbReference>
<dbReference type="EMBL" id="BC014488">
    <property type="protein sequence ID" value="AAH14488.1"/>
    <property type="molecule type" value="mRNA"/>
</dbReference>
<dbReference type="CCDS" id="CCDS12547.1">
    <molecule id="P43686-1"/>
</dbReference>
<dbReference type="CCDS" id="CCDS46076.1">
    <molecule id="P43686-2"/>
</dbReference>
<dbReference type="RefSeq" id="NP_006494.1">
    <molecule id="P43686-1"/>
    <property type="nucleotide sequence ID" value="NM_006503.4"/>
</dbReference>
<dbReference type="RefSeq" id="NP_694546.1">
    <molecule id="P43686-2"/>
    <property type="nucleotide sequence ID" value="NM_153001.3"/>
</dbReference>
<dbReference type="PDB" id="2DVW">
    <property type="method" value="X-ray"/>
    <property type="resolution" value="2.30 A"/>
    <property type="chains" value="B=337-418"/>
</dbReference>
<dbReference type="PDB" id="5GJQ">
    <property type="method" value="EM"/>
    <property type="resolution" value="4.50 A"/>
    <property type="chains" value="K=1-418"/>
</dbReference>
<dbReference type="PDB" id="5GJR">
    <property type="method" value="EM"/>
    <property type="resolution" value="3.50 A"/>
    <property type="chains" value="K/y=1-418"/>
</dbReference>
<dbReference type="PDB" id="5L4G">
    <property type="method" value="EM"/>
    <property type="resolution" value="4.02 A"/>
    <property type="chains" value="K=1-418"/>
</dbReference>
<dbReference type="PDB" id="5LN3">
    <property type="method" value="EM"/>
    <property type="resolution" value="6.80 A"/>
    <property type="chains" value="K=1-418"/>
</dbReference>
<dbReference type="PDB" id="5M32">
    <property type="method" value="EM"/>
    <property type="resolution" value="3.80 A"/>
    <property type="chains" value="e=1-418"/>
</dbReference>
<dbReference type="PDB" id="5T0C">
    <property type="method" value="EM"/>
    <property type="resolution" value="3.80 A"/>
    <property type="chains" value="AD/BD=1-418"/>
</dbReference>
<dbReference type="PDB" id="5T0G">
    <property type="method" value="EM"/>
    <property type="resolution" value="4.40 A"/>
    <property type="chains" value="D=1-418"/>
</dbReference>
<dbReference type="PDB" id="5T0H">
    <property type="method" value="EM"/>
    <property type="resolution" value="6.80 A"/>
    <property type="chains" value="D=1-418"/>
</dbReference>
<dbReference type="PDB" id="5T0I">
    <property type="method" value="EM"/>
    <property type="resolution" value="8.00 A"/>
    <property type="chains" value="D=1-418"/>
</dbReference>
<dbReference type="PDB" id="5T0J">
    <property type="method" value="EM"/>
    <property type="resolution" value="8.00 A"/>
    <property type="chains" value="D=1-418"/>
</dbReference>
<dbReference type="PDB" id="5VFP">
    <property type="method" value="EM"/>
    <property type="resolution" value="4.20 A"/>
    <property type="chains" value="D=39-418"/>
</dbReference>
<dbReference type="PDB" id="5VFQ">
    <property type="method" value="EM"/>
    <property type="resolution" value="4.20 A"/>
    <property type="chains" value="D=39-418"/>
</dbReference>
<dbReference type="PDB" id="5VFR">
    <property type="method" value="EM"/>
    <property type="resolution" value="4.90 A"/>
    <property type="chains" value="D=39-418"/>
</dbReference>
<dbReference type="PDB" id="5VFS">
    <property type="method" value="EM"/>
    <property type="resolution" value="3.60 A"/>
    <property type="chains" value="D=1-418"/>
</dbReference>
<dbReference type="PDB" id="5VFT">
    <property type="method" value="EM"/>
    <property type="resolution" value="7.00 A"/>
    <property type="chains" value="D=39-418"/>
</dbReference>
<dbReference type="PDB" id="5VFU">
    <property type="method" value="EM"/>
    <property type="resolution" value="5.80 A"/>
    <property type="chains" value="D=39-418"/>
</dbReference>
<dbReference type="PDB" id="5VGZ">
    <property type="method" value="EM"/>
    <property type="resolution" value="3.70 A"/>
    <property type="chains" value="D=39-145"/>
</dbReference>
<dbReference type="PDB" id="5VHF">
    <property type="method" value="EM"/>
    <property type="resolution" value="5.70 A"/>
    <property type="chains" value="D=39-406"/>
</dbReference>
<dbReference type="PDB" id="5VHH">
    <property type="method" value="EM"/>
    <property type="resolution" value="6.10 A"/>
    <property type="chains" value="D=39-406"/>
</dbReference>
<dbReference type="PDB" id="5VHI">
    <property type="method" value="EM"/>
    <property type="resolution" value="6.80 A"/>
    <property type="chains" value="D=39-406"/>
</dbReference>
<dbReference type="PDB" id="5VHJ">
    <property type="method" value="EM"/>
    <property type="resolution" value="8.50 A"/>
    <property type="chains" value="D=145-406"/>
</dbReference>
<dbReference type="PDB" id="5VHM">
    <property type="method" value="EM"/>
    <property type="resolution" value="8.30 A"/>
    <property type="chains" value="D=145-406"/>
</dbReference>
<dbReference type="PDB" id="5VHN">
    <property type="method" value="EM"/>
    <property type="resolution" value="7.30 A"/>
    <property type="chains" value="D=145-406"/>
</dbReference>
<dbReference type="PDB" id="5VHO">
    <property type="method" value="EM"/>
    <property type="resolution" value="8.30 A"/>
    <property type="chains" value="D=145-406"/>
</dbReference>
<dbReference type="PDB" id="5VHP">
    <property type="method" value="EM"/>
    <property type="resolution" value="7.90 A"/>
    <property type="chains" value="D=145-406"/>
</dbReference>
<dbReference type="PDB" id="5VHQ">
    <property type="method" value="EM"/>
    <property type="resolution" value="8.90 A"/>
    <property type="chains" value="D=145-406"/>
</dbReference>
<dbReference type="PDB" id="5VHR">
    <property type="method" value="EM"/>
    <property type="resolution" value="7.70 A"/>
    <property type="chains" value="D=145-406"/>
</dbReference>
<dbReference type="PDB" id="5VHS">
    <property type="method" value="EM"/>
    <property type="resolution" value="8.80 A"/>
    <property type="chains" value="D=39-406"/>
</dbReference>
<dbReference type="PDB" id="6MSB">
    <property type="method" value="EM"/>
    <property type="resolution" value="3.00 A"/>
    <property type="chains" value="D=1-418"/>
</dbReference>
<dbReference type="PDB" id="6MSD">
    <property type="method" value="EM"/>
    <property type="resolution" value="3.20 A"/>
    <property type="chains" value="D=1-418"/>
</dbReference>
<dbReference type="PDB" id="6MSE">
    <property type="method" value="EM"/>
    <property type="resolution" value="3.30 A"/>
    <property type="chains" value="P/p=152-198"/>
</dbReference>
<dbReference type="PDB" id="6MSG">
    <property type="method" value="EM"/>
    <property type="resolution" value="3.50 A"/>
    <property type="chains" value="D=1-418"/>
</dbReference>
<dbReference type="PDB" id="6MSH">
    <property type="method" value="EM"/>
    <property type="resolution" value="3.60 A"/>
    <property type="chains" value="D=1-418"/>
</dbReference>
<dbReference type="PDB" id="6MSJ">
    <property type="method" value="EM"/>
    <property type="resolution" value="3.30 A"/>
    <property type="chains" value="D=1-418"/>
</dbReference>
<dbReference type="PDB" id="6MSK">
    <property type="method" value="EM"/>
    <property type="resolution" value="3.20 A"/>
    <property type="chains" value="D=1-418"/>
</dbReference>
<dbReference type="PDB" id="6WJD">
    <property type="method" value="EM"/>
    <property type="resolution" value="4.80 A"/>
    <property type="chains" value="D=1-418"/>
</dbReference>
<dbReference type="PDB" id="6WJN">
    <property type="method" value="EM"/>
    <property type="resolution" value="5.70 A"/>
    <property type="chains" value="D=39-418"/>
</dbReference>
<dbReference type="PDB" id="7QXN">
    <property type="method" value="EM"/>
    <property type="resolution" value="3.70 A"/>
    <property type="chains" value="D=1-418"/>
</dbReference>
<dbReference type="PDB" id="7QXP">
    <property type="method" value="EM"/>
    <property type="resolution" value="3.60 A"/>
    <property type="chains" value="D=1-418"/>
</dbReference>
<dbReference type="PDB" id="7QXU">
    <property type="method" value="EM"/>
    <property type="resolution" value="4.30 A"/>
    <property type="chains" value="D=1-418"/>
</dbReference>
<dbReference type="PDB" id="7QXW">
    <property type="method" value="EM"/>
    <property type="resolution" value="4.10 A"/>
    <property type="chains" value="D=1-418"/>
</dbReference>
<dbReference type="PDB" id="7QXX">
    <property type="method" value="EM"/>
    <property type="resolution" value="4.40 A"/>
    <property type="chains" value="D=1-418"/>
</dbReference>
<dbReference type="PDB" id="7QY7">
    <property type="method" value="EM"/>
    <property type="resolution" value="4.70 A"/>
    <property type="chains" value="D=1-418"/>
</dbReference>
<dbReference type="PDB" id="7QYA">
    <property type="method" value="EM"/>
    <property type="resolution" value="4.80 A"/>
    <property type="chains" value="D=1-418"/>
</dbReference>
<dbReference type="PDB" id="7QYB">
    <property type="method" value="EM"/>
    <property type="resolution" value="4.10 A"/>
    <property type="chains" value="D=1-418"/>
</dbReference>
<dbReference type="PDB" id="7W37">
    <property type="method" value="EM"/>
    <property type="resolution" value="3.00 A"/>
    <property type="chains" value="D=1-418"/>
</dbReference>
<dbReference type="PDB" id="7W38">
    <property type="method" value="EM"/>
    <property type="resolution" value="3.10 A"/>
    <property type="chains" value="D=1-418"/>
</dbReference>
<dbReference type="PDB" id="7W39">
    <property type="method" value="EM"/>
    <property type="resolution" value="3.20 A"/>
    <property type="chains" value="D=1-418"/>
</dbReference>
<dbReference type="PDB" id="7W3A">
    <property type="method" value="EM"/>
    <property type="resolution" value="3.50 A"/>
    <property type="chains" value="D=1-418"/>
</dbReference>
<dbReference type="PDB" id="7W3B">
    <property type="method" value="EM"/>
    <property type="resolution" value="3.60 A"/>
    <property type="chains" value="D=1-418"/>
</dbReference>
<dbReference type="PDB" id="7W3C">
    <property type="method" value="EM"/>
    <property type="resolution" value="3.40 A"/>
    <property type="chains" value="D=1-418"/>
</dbReference>
<dbReference type="PDB" id="7W3F">
    <property type="method" value="EM"/>
    <property type="resolution" value="3.30 A"/>
    <property type="chains" value="D=1-418"/>
</dbReference>
<dbReference type="PDB" id="7W3G">
    <property type="method" value="EM"/>
    <property type="resolution" value="3.20 A"/>
    <property type="chains" value="D=1-418"/>
</dbReference>
<dbReference type="PDB" id="7W3H">
    <property type="method" value="EM"/>
    <property type="resolution" value="3.20 A"/>
    <property type="chains" value="D=1-418"/>
</dbReference>
<dbReference type="PDB" id="7W3I">
    <property type="method" value="EM"/>
    <property type="resolution" value="3.50 A"/>
    <property type="chains" value="D=1-418"/>
</dbReference>
<dbReference type="PDB" id="7W3J">
    <property type="method" value="EM"/>
    <property type="resolution" value="3.50 A"/>
    <property type="chains" value="D=1-418"/>
</dbReference>
<dbReference type="PDB" id="7W3K">
    <property type="method" value="EM"/>
    <property type="resolution" value="3.60 A"/>
    <property type="chains" value="D=1-418"/>
</dbReference>
<dbReference type="PDB" id="7W3M">
    <property type="method" value="EM"/>
    <property type="resolution" value="3.50 A"/>
    <property type="chains" value="D=1-418"/>
</dbReference>
<dbReference type="PDB" id="8CVT">
    <property type="method" value="EM"/>
    <property type="resolution" value="3.00 A"/>
    <property type="chains" value="D=1-418"/>
</dbReference>
<dbReference type="PDB" id="8JRI">
    <property type="method" value="EM"/>
    <property type="resolution" value="3.40 A"/>
    <property type="chains" value="D=1-418"/>
</dbReference>
<dbReference type="PDB" id="8JRT">
    <property type="method" value="EM"/>
    <property type="resolution" value="3.60 A"/>
    <property type="chains" value="D=1-418"/>
</dbReference>
<dbReference type="PDB" id="8JTI">
    <property type="method" value="EM"/>
    <property type="resolution" value="3.80 A"/>
    <property type="chains" value="D=1-418"/>
</dbReference>
<dbReference type="PDB" id="8K0G">
    <property type="method" value="EM"/>
    <property type="resolution" value="3.80 A"/>
    <property type="chains" value="D=1-418"/>
</dbReference>
<dbReference type="PDB" id="8USB">
    <property type="method" value="EM"/>
    <property type="resolution" value="2.73 A"/>
    <property type="chains" value="D=1-418"/>
</dbReference>
<dbReference type="PDB" id="8USC">
    <property type="method" value="EM"/>
    <property type="resolution" value="3.10 A"/>
    <property type="chains" value="D=1-418"/>
</dbReference>
<dbReference type="PDB" id="9E8G">
    <property type="method" value="EM"/>
    <property type="resolution" value="3.01 A"/>
    <property type="chains" value="D=1-418"/>
</dbReference>
<dbReference type="PDB" id="9E8H">
    <property type="method" value="EM"/>
    <property type="resolution" value="2.90 A"/>
    <property type="chains" value="D=1-418"/>
</dbReference>
<dbReference type="PDB" id="9E8I">
    <property type="method" value="EM"/>
    <property type="resolution" value="2.87 A"/>
    <property type="chains" value="D=1-418"/>
</dbReference>
<dbReference type="PDB" id="9E8J">
    <property type="method" value="EM"/>
    <property type="resolution" value="3.47 A"/>
    <property type="chains" value="D=1-418"/>
</dbReference>
<dbReference type="PDB" id="9E8K">
    <property type="method" value="EM"/>
    <property type="resolution" value="4.08 A"/>
    <property type="chains" value="D=1-418"/>
</dbReference>
<dbReference type="PDB" id="9E8L">
    <property type="method" value="EM"/>
    <property type="resolution" value="3.59 A"/>
    <property type="chains" value="D=1-418"/>
</dbReference>
<dbReference type="PDB" id="9E8N">
    <property type="method" value="EM"/>
    <property type="resolution" value="3.62 A"/>
    <property type="chains" value="D=1-418"/>
</dbReference>
<dbReference type="PDB" id="9E8O">
    <property type="method" value="EM"/>
    <property type="resolution" value="3.10 A"/>
    <property type="chains" value="D=1-418"/>
</dbReference>
<dbReference type="PDB" id="9E8Q">
    <property type="method" value="EM"/>
    <property type="resolution" value="3.16 A"/>
    <property type="chains" value="D=1-418"/>
</dbReference>
<dbReference type="PDBsum" id="2DVW"/>
<dbReference type="PDBsum" id="5GJQ"/>
<dbReference type="PDBsum" id="5GJR"/>
<dbReference type="PDBsum" id="5L4G"/>
<dbReference type="PDBsum" id="5LN3"/>
<dbReference type="PDBsum" id="5M32"/>
<dbReference type="PDBsum" id="5T0C"/>
<dbReference type="PDBsum" id="5T0G"/>
<dbReference type="PDBsum" id="5T0H"/>
<dbReference type="PDBsum" id="5T0I"/>
<dbReference type="PDBsum" id="5T0J"/>
<dbReference type="PDBsum" id="5VFP"/>
<dbReference type="PDBsum" id="5VFQ"/>
<dbReference type="PDBsum" id="5VFR"/>
<dbReference type="PDBsum" id="5VFS"/>
<dbReference type="PDBsum" id="5VFT"/>
<dbReference type="PDBsum" id="5VFU"/>
<dbReference type="PDBsum" id="5VGZ"/>
<dbReference type="PDBsum" id="5VHF"/>
<dbReference type="PDBsum" id="5VHH"/>
<dbReference type="PDBsum" id="5VHI"/>
<dbReference type="PDBsum" id="5VHJ"/>
<dbReference type="PDBsum" id="5VHM"/>
<dbReference type="PDBsum" id="5VHN"/>
<dbReference type="PDBsum" id="5VHO"/>
<dbReference type="PDBsum" id="5VHP"/>
<dbReference type="PDBsum" id="5VHQ"/>
<dbReference type="PDBsum" id="5VHR"/>
<dbReference type="PDBsum" id="5VHS"/>
<dbReference type="PDBsum" id="6MSB"/>
<dbReference type="PDBsum" id="6MSD"/>
<dbReference type="PDBsum" id="6MSE"/>
<dbReference type="PDBsum" id="6MSG"/>
<dbReference type="PDBsum" id="6MSH"/>
<dbReference type="PDBsum" id="6MSJ"/>
<dbReference type="PDBsum" id="6MSK"/>
<dbReference type="PDBsum" id="6WJD"/>
<dbReference type="PDBsum" id="6WJN"/>
<dbReference type="PDBsum" id="7QXN"/>
<dbReference type="PDBsum" id="7QXP"/>
<dbReference type="PDBsum" id="7QXU"/>
<dbReference type="PDBsum" id="7QXW"/>
<dbReference type="PDBsum" id="7QXX"/>
<dbReference type="PDBsum" id="7QY7"/>
<dbReference type="PDBsum" id="7QYA"/>
<dbReference type="PDBsum" id="7QYB"/>
<dbReference type="PDBsum" id="7W37"/>
<dbReference type="PDBsum" id="7W38"/>
<dbReference type="PDBsum" id="7W39"/>
<dbReference type="PDBsum" id="7W3A"/>
<dbReference type="PDBsum" id="7W3B"/>
<dbReference type="PDBsum" id="7W3C"/>
<dbReference type="PDBsum" id="7W3F"/>
<dbReference type="PDBsum" id="7W3G"/>
<dbReference type="PDBsum" id="7W3H"/>
<dbReference type="PDBsum" id="7W3I"/>
<dbReference type="PDBsum" id="7W3J"/>
<dbReference type="PDBsum" id="7W3K"/>
<dbReference type="PDBsum" id="7W3M"/>
<dbReference type="PDBsum" id="8CVT"/>
<dbReference type="PDBsum" id="8JRI"/>
<dbReference type="PDBsum" id="8JRT"/>
<dbReference type="PDBsum" id="8JTI"/>
<dbReference type="PDBsum" id="8K0G"/>
<dbReference type="PDBsum" id="8USB"/>
<dbReference type="PDBsum" id="8USC"/>
<dbReference type="PDBsum" id="9E8G"/>
<dbReference type="PDBsum" id="9E8H"/>
<dbReference type="PDBsum" id="9E8I"/>
<dbReference type="PDBsum" id="9E8J"/>
<dbReference type="PDBsum" id="9E8K"/>
<dbReference type="PDBsum" id="9E8L"/>
<dbReference type="PDBsum" id="9E8N"/>
<dbReference type="PDBsum" id="9E8O"/>
<dbReference type="PDBsum" id="9E8Q"/>
<dbReference type="EMDB" id="EMD-14201"/>
<dbReference type="EMDB" id="EMD-14202"/>
<dbReference type="EMDB" id="EMD-14203"/>
<dbReference type="EMDB" id="EMD-14204"/>
<dbReference type="EMDB" id="EMD-14205"/>
<dbReference type="EMDB" id="EMD-14209"/>
<dbReference type="EMDB" id="EMD-14210"/>
<dbReference type="EMDB" id="EMD-14211"/>
<dbReference type="EMDB" id="EMD-21691"/>
<dbReference type="EMDB" id="EMD-21696"/>
<dbReference type="EMDB" id="EMD-27018"/>
<dbReference type="EMDB" id="EMD-32272"/>
<dbReference type="EMDB" id="EMD-32273"/>
<dbReference type="EMDB" id="EMD-32274"/>
<dbReference type="EMDB" id="EMD-32275"/>
<dbReference type="EMDB" id="EMD-32276"/>
<dbReference type="EMDB" id="EMD-32277"/>
<dbReference type="EMDB" id="EMD-32278"/>
<dbReference type="EMDB" id="EMD-32279"/>
<dbReference type="EMDB" id="EMD-32280"/>
<dbReference type="EMDB" id="EMD-32281"/>
<dbReference type="EMDB" id="EMD-32282"/>
<dbReference type="EMDB" id="EMD-32283"/>
<dbReference type="EMDB" id="EMD-32284"/>
<dbReference type="EMDB" id="EMD-36598"/>
<dbReference type="EMDB" id="EMD-36605"/>
<dbReference type="EMDB" id="EMD-36645"/>
<dbReference type="EMDB" id="EMD-36764"/>
<dbReference type="EMDB" id="EMD-4089"/>
<dbReference type="EMDB" id="EMD-4146"/>
<dbReference type="EMDB" id="EMD-42506"/>
<dbReference type="EMDB" id="EMD-42507"/>
<dbReference type="EMDB" id="EMD-47719"/>
<dbReference type="EMDB" id="EMD-47720"/>
<dbReference type="EMDB" id="EMD-47721"/>
<dbReference type="EMDB" id="EMD-47722"/>
<dbReference type="EMDB" id="EMD-47723"/>
<dbReference type="EMDB" id="EMD-47724"/>
<dbReference type="EMDB" id="EMD-47725"/>
<dbReference type="EMDB" id="EMD-47726"/>
<dbReference type="EMDB" id="EMD-47727"/>
<dbReference type="EMDB" id="EMD-60138"/>
<dbReference type="EMDB" id="EMD-60139"/>
<dbReference type="EMDB" id="EMD-8663"/>
<dbReference type="EMDB" id="EMD-8664"/>
<dbReference type="EMDB" id="EMD-8665"/>
<dbReference type="EMDB" id="EMD-8666"/>
<dbReference type="EMDB" id="EMD-8667"/>
<dbReference type="EMDB" id="EMD-8668"/>
<dbReference type="EMDB" id="EMD-8672"/>
<dbReference type="EMDB" id="EMD-8674"/>
<dbReference type="EMDB" id="EMD-8675"/>
<dbReference type="EMDB" id="EMD-8676"/>
<dbReference type="EMDB" id="EMD-8677"/>
<dbReference type="EMDB" id="EMD-8678"/>
<dbReference type="EMDB" id="EMD-8679"/>
<dbReference type="EMDB" id="EMD-8680"/>
<dbReference type="EMDB" id="EMD-8681"/>
<dbReference type="EMDB" id="EMD-8682"/>
<dbReference type="EMDB" id="EMD-8683"/>
<dbReference type="EMDB" id="EMD-8684"/>
<dbReference type="EMDB" id="EMD-9216"/>
<dbReference type="EMDB" id="EMD-9217"/>
<dbReference type="EMDB" id="EMD-9218"/>
<dbReference type="EMDB" id="EMD-9219"/>
<dbReference type="EMDB" id="EMD-9220"/>
<dbReference type="EMDB" id="EMD-9221"/>
<dbReference type="EMDB" id="EMD-9222"/>
<dbReference type="EMDB" id="EMD-9511"/>
<dbReference type="EMDB" id="EMD-9512"/>
<dbReference type="SMR" id="P43686"/>
<dbReference type="BioGRID" id="111677">
    <property type="interactions" value="361"/>
</dbReference>
<dbReference type="ComplexPortal" id="CPX-5993">
    <property type="entry name" value="26S proteasome complex"/>
</dbReference>
<dbReference type="ComplexPortal" id="CPX-8964">
    <property type="entry name" value="19S proteasome regulatory complex"/>
</dbReference>
<dbReference type="ComplexPortal" id="CPX-9082">
    <property type="entry name" value="19S-20S-PA28-alphabeta hybrid proteasome complex"/>
</dbReference>
<dbReference type="ComplexPortal" id="CPX-9085">
    <property type="entry name" value="19S-20S-PA28-gamma hybrid proteasome complex"/>
</dbReference>
<dbReference type="ComplexPortal" id="CPX-9086">
    <property type="entry name" value="30S proteasome complex"/>
</dbReference>
<dbReference type="CORUM" id="P43686"/>
<dbReference type="DIP" id="DIP-29274N"/>
<dbReference type="FunCoup" id="P43686">
    <property type="interactions" value="3168"/>
</dbReference>
<dbReference type="IntAct" id="P43686">
    <property type="interactions" value="165"/>
</dbReference>
<dbReference type="MINT" id="P43686"/>
<dbReference type="STRING" id="9606.ENSP00000157812"/>
<dbReference type="BindingDB" id="P43686"/>
<dbReference type="ChEMBL" id="CHEMBL3831205"/>
<dbReference type="GlyGen" id="P43686">
    <property type="glycosylation" value="2 sites, 1 O-linked glycan (2 sites)"/>
</dbReference>
<dbReference type="iPTMnet" id="P43686"/>
<dbReference type="MetOSite" id="P43686"/>
<dbReference type="PhosphoSitePlus" id="P43686"/>
<dbReference type="SwissPalm" id="P43686"/>
<dbReference type="BioMuta" id="PSMC4"/>
<dbReference type="DMDM" id="20532409"/>
<dbReference type="OGP" id="P43686"/>
<dbReference type="jPOST" id="P43686"/>
<dbReference type="MassIVE" id="P43686"/>
<dbReference type="PaxDb" id="9606-ENSP00000157812"/>
<dbReference type="PeptideAtlas" id="P43686"/>
<dbReference type="ProteomicsDB" id="55650">
    <molecule id="P43686-1"/>
</dbReference>
<dbReference type="ProteomicsDB" id="55651">
    <molecule id="P43686-2"/>
</dbReference>
<dbReference type="Pumba" id="P43686"/>
<dbReference type="Antibodypedia" id="1215">
    <property type="antibodies" value="240 antibodies from 33 providers"/>
</dbReference>
<dbReference type="DNASU" id="5704"/>
<dbReference type="Ensembl" id="ENST00000157812.7">
    <molecule id="P43686-1"/>
    <property type="protein sequence ID" value="ENSP00000157812.1"/>
    <property type="gene ID" value="ENSG00000013275.8"/>
</dbReference>
<dbReference type="Ensembl" id="ENST00000455878.2">
    <molecule id="P43686-2"/>
    <property type="protein sequence ID" value="ENSP00000413869.1"/>
    <property type="gene ID" value="ENSG00000013275.8"/>
</dbReference>
<dbReference type="Ensembl" id="ENST00000629691.3">
    <molecule id="P43686-1"/>
    <property type="protein sequence ID" value="ENSP00000487367.1"/>
    <property type="gene ID" value="ENSG00000281221.3"/>
</dbReference>
<dbReference type="Ensembl" id="ENST00000630857.1">
    <molecule id="P43686-2"/>
    <property type="protein sequence ID" value="ENSP00000485851.1"/>
    <property type="gene ID" value="ENSG00000281221.3"/>
</dbReference>
<dbReference type="GeneID" id="5704"/>
<dbReference type="KEGG" id="hsa:5704"/>
<dbReference type="MANE-Select" id="ENST00000157812.7">
    <property type="protein sequence ID" value="ENSP00000157812.1"/>
    <property type="RefSeq nucleotide sequence ID" value="NM_006503.4"/>
    <property type="RefSeq protein sequence ID" value="NP_006494.1"/>
</dbReference>
<dbReference type="UCSC" id="uc002omq.5">
    <molecule id="P43686-1"/>
    <property type="organism name" value="human"/>
</dbReference>
<dbReference type="AGR" id="HGNC:9551"/>
<dbReference type="CTD" id="5704"/>
<dbReference type="DisGeNET" id="5704"/>
<dbReference type="GeneCards" id="PSMC4"/>
<dbReference type="HGNC" id="HGNC:9551">
    <property type="gene designation" value="PSMC4"/>
</dbReference>
<dbReference type="HPA" id="ENSG00000013275">
    <property type="expression patterns" value="Low tissue specificity"/>
</dbReference>
<dbReference type="MIM" id="602707">
    <property type="type" value="gene"/>
</dbReference>
<dbReference type="neXtProt" id="NX_P43686"/>
<dbReference type="OpenTargets" id="ENSG00000013275"/>
<dbReference type="PharmGKB" id="PA33896"/>
<dbReference type="VEuPathDB" id="HostDB:ENSG00000013275"/>
<dbReference type="eggNOG" id="KOG0727">
    <property type="taxonomic scope" value="Eukaryota"/>
</dbReference>
<dbReference type="GeneTree" id="ENSGT01020000230346"/>
<dbReference type="HOGENOM" id="CLU_000688_2_0_1"/>
<dbReference type="InParanoid" id="P43686"/>
<dbReference type="OMA" id="QDIGGMD"/>
<dbReference type="OrthoDB" id="10255768at2759"/>
<dbReference type="PAN-GO" id="P43686">
    <property type="GO annotations" value="3 GO annotations based on evolutionary models"/>
</dbReference>
<dbReference type="PhylomeDB" id="P43686"/>
<dbReference type="TreeFam" id="TF106227"/>
<dbReference type="PathwayCommons" id="P43686"/>
<dbReference type="Reactome" id="R-HSA-1169091">
    <property type="pathway name" value="Activation of NF-kappaB in B cells"/>
</dbReference>
<dbReference type="Reactome" id="R-HSA-1234176">
    <property type="pathway name" value="Oxygen-dependent proline hydroxylation of Hypoxia-inducible Factor Alpha"/>
</dbReference>
<dbReference type="Reactome" id="R-HSA-1236974">
    <property type="pathway name" value="ER-Phagosome pathway"/>
</dbReference>
<dbReference type="Reactome" id="R-HSA-1236978">
    <property type="pathway name" value="Cross-presentation of soluble exogenous antigens (endosomes)"/>
</dbReference>
<dbReference type="Reactome" id="R-HSA-174084">
    <property type="pathway name" value="Autodegradation of Cdh1 by Cdh1:APC/C"/>
</dbReference>
<dbReference type="Reactome" id="R-HSA-174113">
    <property type="pathway name" value="SCF-beta-TrCP mediated degradation of Emi1"/>
</dbReference>
<dbReference type="Reactome" id="R-HSA-174154">
    <property type="pathway name" value="APC/C:Cdc20 mediated degradation of Securin"/>
</dbReference>
<dbReference type="Reactome" id="R-HSA-174178">
    <property type="pathway name" value="APC/C:Cdh1 mediated degradation of Cdc20 and other APC/C:Cdh1 targeted proteins in late mitosis/early G1"/>
</dbReference>
<dbReference type="Reactome" id="R-HSA-174184">
    <property type="pathway name" value="Cdc20:Phospho-APC/C mediated degradation of Cyclin A"/>
</dbReference>
<dbReference type="Reactome" id="R-HSA-180534">
    <property type="pathway name" value="Vpu mediated degradation of CD4"/>
</dbReference>
<dbReference type="Reactome" id="R-HSA-180585">
    <property type="pathway name" value="Vif-mediated degradation of APOBEC3G"/>
</dbReference>
<dbReference type="Reactome" id="R-HSA-187577">
    <property type="pathway name" value="SCF(Skp2)-mediated degradation of p27/p21"/>
</dbReference>
<dbReference type="Reactome" id="R-HSA-195253">
    <property type="pathway name" value="Degradation of beta-catenin by the destruction complex"/>
</dbReference>
<dbReference type="Reactome" id="R-HSA-202424">
    <property type="pathway name" value="Downstream TCR signaling"/>
</dbReference>
<dbReference type="Reactome" id="R-HSA-211733">
    <property type="pathway name" value="Regulation of activated PAK-2p34 by proteasome mediated degradation"/>
</dbReference>
<dbReference type="Reactome" id="R-HSA-2467813">
    <property type="pathway name" value="Separation of Sister Chromatids"/>
</dbReference>
<dbReference type="Reactome" id="R-HSA-2871837">
    <property type="pathway name" value="FCERI mediated NF-kB activation"/>
</dbReference>
<dbReference type="Reactome" id="R-HSA-349425">
    <property type="pathway name" value="Autodegradation of the E3 ubiquitin ligase COP1"/>
</dbReference>
<dbReference type="Reactome" id="R-HSA-350562">
    <property type="pathway name" value="Regulation of ornithine decarboxylase (ODC)"/>
</dbReference>
<dbReference type="Reactome" id="R-HSA-382556">
    <property type="pathway name" value="ABC-family proteins mediated transport"/>
</dbReference>
<dbReference type="Reactome" id="R-HSA-450408">
    <property type="pathway name" value="AUF1 (hnRNP D0) binds and destabilizes mRNA"/>
</dbReference>
<dbReference type="Reactome" id="R-HSA-4608870">
    <property type="pathway name" value="Asymmetric localization of PCP proteins"/>
</dbReference>
<dbReference type="Reactome" id="R-HSA-4641257">
    <property type="pathway name" value="Degradation of AXIN"/>
</dbReference>
<dbReference type="Reactome" id="R-HSA-4641258">
    <property type="pathway name" value="Degradation of DVL"/>
</dbReference>
<dbReference type="Reactome" id="R-HSA-5358346">
    <property type="pathway name" value="Hedgehog ligand biogenesis"/>
</dbReference>
<dbReference type="Reactome" id="R-HSA-5362768">
    <property type="pathway name" value="Hh mutants are degraded by ERAD"/>
</dbReference>
<dbReference type="Reactome" id="R-HSA-5607761">
    <property type="pathway name" value="Dectin-1 mediated noncanonical NF-kB signaling"/>
</dbReference>
<dbReference type="Reactome" id="R-HSA-5607764">
    <property type="pathway name" value="CLEC7A (Dectin-1) signaling"/>
</dbReference>
<dbReference type="Reactome" id="R-HSA-5610780">
    <property type="pathway name" value="Degradation of GLI1 by the proteasome"/>
</dbReference>
<dbReference type="Reactome" id="R-HSA-5610783">
    <property type="pathway name" value="Degradation of GLI2 by the proteasome"/>
</dbReference>
<dbReference type="Reactome" id="R-HSA-5610785">
    <property type="pathway name" value="GLI3 is processed to GLI3R by the proteasome"/>
</dbReference>
<dbReference type="Reactome" id="R-HSA-5632684">
    <property type="pathway name" value="Hedgehog 'on' state"/>
</dbReference>
<dbReference type="Reactome" id="R-HSA-5658442">
    <property type="pathway name" value="Regulation of RAS by GAPs"/>
</dbReference>
<dbReference type="Reactome" id="R-HSA-5668541">
    <property type="pathway name" value="TNFR2 non-canonical NF-kB pathway"/>
</dbReference>
<dbReference type="Reactome" id="R-HSA-5676590">
    <property type="pathway name" value="NIK--&gt;noncanonical NF-kB signaling"/>
</dbReference>
<dbReference type="Reactome" id="R-HSA-5678895">
    <property type="pathway name" value="Defective CFTR causes cystic fibrosis"/>
</dbReference>
<dbReference type="Reactome" id="R-HSA-5687128">
    <property type="pathway name" value="MAPK6/MAPK4 signaling"/>
</dbReference>
<dbReference type="Reactome" id="R-HSA-5689603">
    <property type="pathway name" value="UCH proteinases"/>
</dbReference>
<dbReference type="Reactome" id="R-HSA-5689880">
    <property type="pathway name" value="Ub-specific processing proteases"/>
</dbReference>
<dbReference type="Reactome" id="R-HSA-68867">
    <property type="pathway name" value="Assembly of the pre-replicative complex"/>
</dbReference>
<dbReference type="Reactome" id="R-HSA-68949">
    <property type="pathway name" value="Orc1 removal from chromatin"/>
</dbReference>
<dbReference type="Reactome" id="R-HSA-69017">
    <property type="pathway name" value="CDK-mediated phosphorylation and removal of Cdc6"/>
</dbReference>
<dbReference type="Reactome" id="R-HSA-69481">
    <property type="pathway name" value="G2/M Checkpoints"/>
</dbReference>
<dbReference type="Reactome" id="R-HSA-69601">
    <property type="pathway name" value="Ubiquitin Mediated Degradation of Phosphorylated Cdc25A"/>
</dbReference>
<dbReference type="Reactome" id="R-HSA-75815">
    <property type="pathway name" value="Ubiquitin-dependent degradation of Cyclin D"/>
</dbReference>
<dbReference type="Reactome" id="R-HSA-8852276">
    <property type="pathway name" value="The role of GTSE1 in G2/M progression after G2 checkpoint"/>
</dbReference>
<dbReference type="Reactome" id="R-HSA-8854050">
    <property type="pathway name" value="FBXL7 down-regulates AURKA during mitotic entry and in early mitosis"/>
</dbReference>
<dbReference type="Reactome" id="R-HSA-8939236">
    <property type="pathway name" value="RUNX1 regulates transcription of genes involved in differentiation of HSCs"/>
</dbReference>
<dbReference type="Reactome" id="R-HSA-8939902">
    <property type="pathway name" value="Regulation of RUNX2 expression and activity"/>
</dbReference>
<dbReference type="Reactome" id="R-HSA-8941858">
    <property type="pathway name" value="Regulation of RUNX3 expression and activity"/>
</dbReference>
<dbReference type="Reactome" id="R-HSA-8948751">
    <property type="pathway name" value="Regulation of PTEN stability and activity"/>
</dbReference>
<dbReference type="Reactome" id="R-HSA-8951664">
    <property type="pathway name" value="Neddylation"/>
</dbReference>
<dbReference type="Reactome" id="R-HSA-9010553">
    <property type="pathway name" value="Regulation of expression of SLITs and ROBOs"/>
</dbReference>
<dbReference type="Reactome" id="R-HSA-9020702">
    <property type="pathway name" value="Interleukin-1 signaling"/>
</dbReference>
<dbReference type="Reactome" id="R-HSA-9604323">
    <property type="pathway name" value="Negative regulation of NOTCH4 signaling"/>
</dbReference>
<dbReference type="Reactome" id="R-HSA-9755511">
    <property type="pathway name" value="KEAP1-NFE2L2 pathway"/>
</dbReference>
<dbReference type="Reactome" id="R-HSA-9762114">
    <property type="pathway name" value="GSK3B and BTRC:CUL1-mediated-degradation of NFE2L2"/>
</dbReference>
<dbReference type="Reactome" id="R-HSA-9824272">
    <property type="pathway name" value="Somitogenesis"/>
</dbReference>
<dbReference type="Reactome" id="R-HSA-983168">
    <property type="pathway name" value="Antigen processing: Ubiquitination &amp; Proteasome degradation"/>
</dbReference>
<dbReference type="Reactome" id="R-HSA-9907900">
    <property type="pathway name" value="Proteasome assembly"/>
</dbReference>
<dbReference type="SignaLink" id="P43686"/>
<dbReference type="SIGNOR" id="P43686"/>
<dbReference type="BioGRID-ORCS" id="5704">
    <property type="hits" value="774 hits in 1169 CRISPR screens"/>
</dbReference>
<dbReference type="ChiTaRS" id="PSMC4">
    <property type="organism name" value="human"/>
</dbReference>
<dbReference type="EvolutionaryTrace" id="P43686"/>
<dbReference type="GeneWiki" id="PSMC4"/>
<dbReference type="GenomeRNAi" id="5704"/>
<dbReference type="Pharos" id="P43686">
    <property type="development level" value="Tchem"/>
</dbReference>
<dbReference type="PRO" id="PR:P43686"/>
<dbReference type="Proteomes" id="UP000005640">
    <property type="component" value="Chromosome 19"/>
</dbReference>
<dbReference type="RNAct" id="P43686">
    <property type="molecule type" value="protein"/>
</dbReference>
<dbReference type="Bgee" id="ENSG00000013275">
    <property type="expression patterns" value="Expressed in gastrocnemius and 105 other cell types or tissues"/>
</dbReference>
<dbReference type="ExpressionAtlas" id="P43686">
    <property type="expression patterns" value="baseline and differential"/>
</dbReference>
<dbReference type="GO" id="GO:0036064">
    <property type="term" value="C:ciliary basal body"/>
    <property type="evidence" value="ECO:0000314"/>
    <property type="project" value="HPA"/>
</dbReference>
<dbReference type="GO" id="GO:0005829">
    <property type="term" value="C:cytosol"/>
    <property type="evidence" value="ECO:0000314"/>
    <property type="project" value="HPA"/>
</dbReference>
<dbReference type="GO" id="GO:0016020">
    <property type="term" value="C:membrane"/>
    <property type="evidence" value="ECO:0007005"/>
    <property type="project" value="UniProtKB"/>
</dbReference>
<dbReference type="GO" id="GO:0005654">
    <property type="term" value="C:nucleoplasm"/>
    <property type="evidence" value="ECO:0000314"/>
    <property type="project" value="HPA"/>
</dbReference>
<dbReference type="GO" id="GO:0005634">
    <property type="term" value="C:nucleus"/>
    <property type="evidence" value="ECO:0007005"/>
    <property type="project" value="UniProtKB"/>
</dbReference>
<dbReference type="GO" id="GO:0022624">
    <property type="term" value="C:proteasome accessory complex"/>
    <property type="evidence" value="ECO:0000250"/>
    <property type="project" value="UniProtKB"/>
</dbReference>
<dbReference type="GO" id="GO:0000502">
    <property type="term" value="C:proteasome complex"/>
    <property type="evidence" value="ECO:0000314"/>
    <property type="project" value="UniProtKB"/>
</dbReference>
<dbReference type="GO" id="GO:0008540">
    <property type="term" value="C:proteasome regulatory particle, base subcomplex"/>
    <property type="evidence" value="ECO:0000318"/>
    <property type="project" value="GO_Central"/>
</dbReference>
<dbReference type="GO" id="GO:0005524">
    <property type="term" value="F:ATP binding"/>
    <property type="evidence" value="ECO:0007669"/>
    <property type="project" value="UniProtKB-KW"/>
</dbReference>
<dbReference type="GO" id="GO:0016887">
    <property type="term" value="F:ATP hydrolysis activity"/>
    <property type="evidence" value="ECO:0007669"/>
    <property type="project" value="InterPro"/>
</dbReference>
<dbReference type="GO" id="GO:0036402">
    <property type="term" value="F:proteasome-activating activity"/>
    <property type="evidence" value="ECO:0000318"/>
    <property type="project" value="GO_Central"/>
</dbReference>
<dbReference type="GO" id="GO:0001824">
    <property type="term" value="P:blastocyst development"/>
    <property type="evidence" value="ECO:0007669"/>
    <property type="project" value="Ensembl"/>
</dbReference>
<dbReference type="GO" id="GO:0043161">
    <property type="term" value="P:proteasome-mediated ubiquitin-dependent protein catabolic process"/>
    <property type="evidence" value="ECO:0000318"/>
    <property type="project" value="GO_Central"/>
</dbReference>
<dbReference type="GO" id="GO:0006508">
    <property type="term" value="P:proteolysis"/>
    <property type="evidence" value="ECO:0000304"/>
    <property type="project" value="ProtInc"/>
</dbReference>
<dbReference type="CDD" id="cd19502">
    <property type="entry name" value="RecA-like_PAN_like"/>
    <property type="match status" value="1"/>
</dbReference>
<dbReference type="FunFam" id="1.10.8.60:FF:000018">
    <property type="entry name" value="26S protease regulatory subunit 6B"/>
    <property type="match status" value="1"/>
</dbReference>
<dbReference type="FunFam" id="2.40.50.140:FF:000046">
    <property type="entry name" value="26S protease regulatory subunit 6B"/>
    <property type="match status" value="1"/>
</dbReference>
<dbReference type="FunFam" id="3.40.50.300:FF:000033">
    <property type="entry name" value="26S protease regulatory subunit 6B"/>
    <property type="match status" value="1"/>
</dbReference>
<dbReference type="Gene3D" id="1.10.8.60">
    <property type="match status" value="1"/>
</dbReference>
<dbReference type="Gene3D" id="2.40.50.140">
    <property type="entry name" value="Nucleic acid-binding proteins"/>
    <property type="match status" value="1"/>
</dbReference>
<dbReference type="Gene3D" id="3.40.50.300">
    <property type="entry name" value="P-loop containing nucleotide triphosphate hydrolases"/>
    <property type="match status" value="1"/>
</dbReference>
<dbReference type="IDEAL" id="IID00236"/>
<dbReference type="InterPro" id="IPR050221">
    <property type="entry name" value="26S_Proteasome_ATPase"/>
</dbReference>
<dbReference type="InterPro" id="IPR003593">
    <property type="entry name" value="AAA+_ATPase"/>
</dbReference>
<dbReference type="InterPro" id="IPR041569">
    <property type="entry name" value="AAA_lid_3"/>
</dbReference>
<dbReference type="InterPro" id="IPR003959">
    <property type="entry name" value="ATPase_AAA_core"/>
</dbReference>
<dbReference type="InterPro" id="IPR003960">
    <property type="entry name" value="ATPase_AAA_CS"/>
</dbReference>
<dbReference type="InterPro" id="IPR012340">
    <property type="entry name" value="NA-bd_OB-fold"/>
</dbReference>
<dbReference type="InterPro" id="IPR027417">
    <property type="entry name" value="P-loop_NTPase"/>
</dbReference>
<dbReference type="InterPro" id="IPR032501">
    <property type="entry name" value="Prot_ATP_ID_OB_2nd"/>
</dbReference>
<dbReference type="PANTHER" id="PTHR23073">
    <property type="entry name" value="26S PROTEASOME REGULATORY SUBUNIT"/>
    <property type="match status" value="1"/>
</dbReference>
<dbReference type="Pfam" id="PF00004">
    <property type="entry name" value="AAA"/>
    <property type="match status" value="1"/>
</dbReference>
<dbReference type="Pfam" id="PF17862">
    <property type="entry name" value="AAA_lid_3"/>
    <property type="match status" value="1"/>
</dbReference>
<dbReference type="Pfam" id="PF16450">
    <property type="entry name" value="Prot_ATP_ID_OB_C"/>
    <property type="match status" value="1"/>
</dbReference>
<dbReference type="SMART" id="SM00382">
    <property type="entry name" value="AAA"/>
    <property type="match status" value="1"/>
</dbReference>
<dbReference type="SUPFAM" id="SSF52540">
    <property type="entry name" value="P-loop containing nucleoside triphosphate hydrolases"/>
    <property type="match status" value="1"/>
</dbReference>
<dbReference type="PROSITE" id="PS00674">
    <property type="entry name" value="AAA"/>
    <property type="match status" value="1"/>
</dbReference>
<feature type="chain" id="PRO_0000084686" description="26S proteasome regulatory subunit 6B">
    <location>
        <begin position="1"/>
        <end position="418"/>
    </location>
</feature>
<feature type="binding site" evidence="1">
    <location>
        <begin position="206"/>
        <end position="213"/>
    </location>
    <ligand>
        <name>ATP</name>
        <dbReference type="ChEBI" id="CHEBI:30616"/>
    </ligand>
</feature>
<feature type="modified residue" description="N-acetylmethionine" evidence="11 17 21 22">
    <location>
        <position position="1"/>
    </location>
</feature>
<feature type="modified residue" description="Phosphoserine" evidence="19">
    <location>
        <position position="21"/>
    </location>
</feature>
<feature type="modified residue" description="Phosphothreonine" evidence="23">
    <location>
        <position position="25"/>
    </location>
</feature>
<feature type="modified residue" description="Phosphoserine" evidence="14 15 16 19 20">
    <location>
        <position position="28"/>
    </location>
</feature>
<feature type="modified residue" description="N6-acetyllysine" evidence="18">
    <location>
        <position position="397"/>
    </location>
</feature>
<feature type="modified residue" description="N6-acetyllysine" evidence="18">
    <location>
        <position position="401"/>
    </location>
</feature>
<feature type="splice variant" id="VSP_000022" description="In isoform 2." evidence="12">
    <location>
        <begin position="46"/>
        <end position="76"/>
    </location>
</feature>
<feature type="sequence conflict" description="In Ref. 4; AAC32612." evidence="13" ref="4">
    <original>L</original>
    <variation>F</variation>
    <location>
        <position position="73"/>
    </location>
</feature>
<feature type="sequence conflict" description="In Ref. 4; AAC32612." evidence="13" ref="4">
    <original>N</original>
    <variation>S</variation>
    <location>
        <position position="110"/>
    </location>
</feature>
<feature type="sequence conflict" description="In Ref. 1; no nucleotide entry." evidence="13" ref="1">
    <original>T</original>
    <variation>A</variation>
    <location>
        <position position="118"/>
    </location>
</feature>
<feature type="sequence conflict" description="In Ref. 4; AAC32612." evidence="13" ref="4">
    <original>D</original>
    <variation>G</variation>
    <location>
        <position position="157"/>
    </location>
</feature>
<feature type="sequence conflict" description="In Ref. 4; AAC32612." evidence="13" ref="4">
    <original>L</original>
    <variation>V</variation>
    <location>
        <position position="185"/>
    </location>
</feature>
<feature type="helix" evidence="25">
    <location>
        <begin position="40"/>
        <end position="82"/>
    </location>
</feature>
<feature type="strand" evidence="25">
    <location>
        <begin position="87"/>
        <end position="91"/>
    </location>
</feature>
<feature type="strand" evidence="25">
    <location>
        <begin position="110"/>
        <end position="113"/>
    </location>
</feature>
<feature type="strand" evidence="25">
    <location>
        <begin position="129"/>
        <end position="133"/>
    </location>
</feature>
<feature type="turn" evidence="25">
    <location>
        <begin position="134"/>
        <end position="136"/>
    </location>
</feature>
<feature type="strand" evidence="25">
    <location>
        <begin position="139"/>
        <end position="141"/>
    </location>
</feature>
<feature type="turn" evidence="25">
    <location>
        <begin position="164"/>
        <end position="166"/>
    </location>
</feature>
<feature type="helix" evidence="25">
    <location>
        <begin position="171"/>
        <end position="177"/>
    </location>
</feature>
<feature type="turn" evidence="25">
    <location>
        <begin position="178"/>
        <end position="182"/>
    </location>
</feature>
<feature type="helix" evidence="25">
    <location>
        <begin position="183"/>
        <end position="186"/>
    </location>
</feature>
<feature type="helix" evidence="25">
    <location>
        <begin position="188"/>
        <end position="192"/>
    </location>
</feature>
<feature type="turn" evidence="25">
    <location>
        <begin position="193"/>
        <end position="195"/>
    </location>
</feature>
<feature type="strand" evidence="25">
    <location>
        <begin position="201"/>
        <end position="205"/>
    </location>
</feature>
<feature type="helix" evidence="25">
    <location>
        <begin position="212"/>
        <end position="221"/>
    </location>
</feature>
<feature type="strand" evidence="25">
    <location>
        <begin position="224"/>
        <end position="231"/>
    </location>
</feature>
<feature type="helix" evidence="25">
    <location>
        <begin position="232"/>
        <end position="235"/>
    </location>
</feature>
<feature type="helix" evidence="25">
    <location>
        <begin position="243"/>
        <end position="256"/>
    </location>
</feature>
<feature type="strand" evidence="25">
    <location>
        <begin position="259"/>
        <end position="266"/>
    </location>
</feature>
<feature type="helix" evidence="25">
    <location>
        <begin position="267"/>
        <end position="269"/>
    </location>
</feature>
<feature type="helix" evidence="25">
    <location>
        <begin position="282"/>
        <end position="296"/>
    </location>
</feature>
<feature type="strand" evidence="25">
    <location>
        <begin position="297"/>
        <end position="300"/>
    </location>
</feature>
<feature type="strand" evidence="25">
    <location>
        <begin position="303"/>
        <end position="312"/>
    </location>
</feature>
<feature type="strand" evidence="25">
    <location>
        <begin position="314"/>
        <end position="317"/>
    </location>
</feature>
<feature type="helix" evidence="25">
    <location>
        <begin position="319"/>
        <end position="321"/>
    </location>
</feature>
<feature type="helix" evidence="24">
    <location>
        <begin position="338"/>
        <end position="348"/>
    </location>
</feature>
<feature type="turn" evidence="24">
    <location>
        <begin position="349"/>
        <end position="351"/>
    </location>
</feature>
<feature type="helix" evidence="24">
    <location>
        <begin position="361"/>
        <end position="364"/>
    </location>
</feature>
<feature type="helix" evidence="24">
    <location>
        <begin position="372"/>
        <end position="388"/>
    </location>
</feature>
<feature type="strand" evidence="24">
    <location>
        <begin position="392"/>
        <end position="394"/>
    </location>
</feature>
<feature type="helix" evidence="24">
    <location>
        <begin position="396"/>
        <end position="406"/>
    </location>
</feature>
<accession>P43686</accession>
<accession>Q96FV5</accession>
<accession>Q9UBM3</accession>
<accession>Q9UEX3</accession>
<comment type="function">
    <text evidence="2 9">Component of the 26S proteasome, a multiprotein complex involved in the ATP-dependent degradation of ubiquitinated proteins. This complex plays a key role in the maintenance of protein homeostasis by removing misfolded or damaged proteins, which could impair cellular functions, and by removing proteins whose functions are no longer required. Therefore, the proteasome participates in numerous cellular processes, including cell cycle progression, apoptosis, or DNA damage repair. PSMC4 belongs to the heterohexameric ring of AAA (ATPases associated with diverse cellular activities) proteins that unfolds ubiquitinated target proteins that are concurrently translocated into a proteolytic chamber and degraded into peptides.</text>
</comment>
<comment type="subunit">
    <text evidence="3 4 5 6 7 8 10">Component of the 19S proteasome regulatory particle complex. The 26S proteasome consists of a 20S core particle (CP) and two 19S regulatory subunits (RP). The regulatory particle is made of a lid composed of 9 subunits, a base containing 6 ATPases including PSMC4 and few additional components (PubMed:27342858, PubMed:27428775). Interacts with NR1I3. Interacts with PAAF1 (PubMed:15831487). Interacts with TRIM5 (PubMed:22078707). Interacts with ZFAND1 (PubMed:29804830).</text>
</comment>
<comment type="interaction">
    <interactant intactId="EBI-743997">
        <id>P43686</id>
    </interactant>
    <interactant intactId="EBI-1049597">
        <id>P27797</id>
        <label>CALR</label>
    </interactant>
    <organismsDiffer>false</organismsDiffer>
    <experiments>3</experiments>
</comment>
<comment type="interaction">
    <interactant intactId="EBI-743997">
        <id>P43686</id>
    </interactant>
    <interactant intactId="EBI-351007">
        <id>P36957</id>
        <label>DLST</label>
    </interactant>
    <organismsDiffer>false</organismsDiffer>
    <experiments>5</experiments>
</comment>
<comment type="interaction">
    <interactant intactId="EBI-743997">
        <id>P43686</id>
    </interactant>
    <interactant intactId="EBI-1055945">
        <id>Q8TDX7</id>
        <label>NEK7</label>
    </interactant>
    <organismsDiffer>false</organismsDiffer>
    <experiments>3</experiments>
</comment>
<comment type="interaction">
    <interactant intactId="EBI-743997">
        <id>P43686</id>
    </interactant>
    <interactant intactId="EBI-357598">
        <id>P62191</id>
        <label>PSMC1</label>
    </interactant>
    <organismsDiffer>false</organismsDiffer>
    <experiments>5</experiments>
</comment>
<comment type="interaction">
    <interactant intactId="EBI-743997">
        <id>P43686</id>
    </interactant>
    <interactant intactId="EBI-357745">
        <id>P62195</id>
        <label>PSMC5</label>
    </interactant>
    <organismsDiffer>false</organismsDiffer>
    <experiments>19</experiments>
</comment>
<comment type="interaction">
    <interactant intactId="EBI-743997">
        <id>P43686</id>
    </interactant>
    <interactant intactId="EBI-357669">
        <id>P62333</id>
        <label>PSMC6</label>
    </interactant>
    <organismsDiffer>false</organismsDiffer>
    <experiments>9</experiments>
</comment>
<comment type="interaction">
    <interactant intactId="EBI-743997">
        <id>P43686</id>
    </interactant>
    <interactant intactId="EBI-752185">
        <id>O75832</id>
        <label>PSMD10</label>
    </interactant>
    <organismsDiffer>false</organismsDiffer>
    <experiments>26</experiments>
</comment>
<comment type="interaction">
    <interactant intactId="EBI-743997">
        <id>P43686</id>
    </interactant>
    <interactant intactId="EBI-359318">
        <id>P55036</id>
        <label>PSMD4</label>
    </interactant>
    <organismsDiffer>false</organismsDiffer>
    <experiments>4</experiments>
</comment>
<comment type="interaction">
    <interactant intactId="EBI-743997">
        <id>P43686</id>
    </interactant>
    <interactant intactId="EBI-8377084">
        <id>Q9Z2X2</id>
        <label>Psmd10</label>
    </interactant>
    <organismsDiffer>true</organismsDiffer>
    <experiments>4</experiments>
</comment>
<comment type="interaction">
    <interactant intactId="EBI-21522939">
        <id>P43686-2</id>
    </interactant>
    <interactant intactId="EBI-990792">
        <id>P00441</id>
        <label>SOD1</label>
    </interactant>
    <organismsDiffer>false</organismsDiffer>
    <experiments>3</experiments>
</comment>
<comment type="subcellular location">
    <subcellularLocation>
        <location>Cytoplasm</location>
    </subcellularLocation>
    <subcellularLocation>
        <location>Nucleus</location>
    </subcellularLocation>
</comment>
<comment type="alternative products">
    <event type="alternative splicing"/>
    <isoform>
        <id>P43686-1</id>
        <name>1</name>
        <sequence type="displayed"/>
    </isoform>
    <isoform>
        <id>P43686-2</id>
        <name>2</name>
        <sequence type="described" ref="VSP_000022"/>
    </isoform>
</comment>
<comment type="similarity">
    <text evidence="13">Belongs to the AAA ATPase family.</text>
</comment>
<name>PRS6B_HUMAN</name>
<evidence type="ECO:0000255" key="1"/>
<evidence type="ECO:0000269" key="2">
    <source>
    </source>
</evidence>
<evidence type="ECO:0000269" key="3">
    <source>
    </source>
</evidence>
<evidence type="ECO:0000269" key="4">
    <source>
    </source>
</evidence>
<evidence type="ECO:0000269" key="5">
    <source>
    </source>
</evidence>
<evidence type="ECO:0000269" key="6">
    <source>
    </source>
</evidence>
<evidence type="ECO:0000269" key="7">
    <source>
    </source>
</evidence>
<evidence type="ECO:0000269" key="8">
    <source>
    </source>
</evidence>
<evidence type="ECO:0000269" key="9">
    <source>
    </source>
</evidence>
<evidence type="ECO:0000269" key="10">
    <source>
    </source>
</evidence>
<evidence type="ECO:0000269" key="11">
    <source ref="8"/>
</evidence>
<evidence type="ECO:0000303" key="12">
    <source>
    </source>
</evidence>
<evidence type="ECO:0000305" key="13"/>
<evidence type="ECO:0007744" key="14">
    <source>
    </source>
</evidence>
<evidence type="ECO:0007744" key="15">
    <source>
    </source>
</evidence>
<evidence type="ECO:0007744" key="16">
    <source>
    </source>
</evidence>
<evidence type="ECO:0007744" key="17">
    <source>
    </source>
</evidence>
<evidence type="ECO:0007744" key="18">
    <source>
    </source>
</evidence>
<evidence type="ECO:0007744" key="19">
    <source>
    </source>
</evidence>
<evidence type="ECO:0007744" key="20">
    <source>
    </source>
</evidence>
<evidence type="ECO:0007744" key="21">
    <source>
    </source>
</evidence>
<evidence type="ECO:0007744" key="22">
    <source>
    </source>
</evidence>
<evidence type="ECO:0007744" key="23">
    <source>
    </source>
</evidence>
<evidence type="ECO:0007829" key="24">
    <source>
        <dbReference type="PDB" id="2DVW"/>
    </source>
</evidence>
<evidence type="ECO:0007829" key="25">
    <source>
        <dbReference type="PDB" id="9E8J"/>
    </source>
</evidence>
<protein>
    <recommendedName>
        <fullName>26S proteasome regulatory subunit 6B</fullName>
    </recommendedName>
    <alternativeName>
        <fullName>26S proteasome AAA-ATPase subunit RPT3</fullName>
    </alternativeName>
    <alternativeName>
        <fullName>MB67-interacting protein</fullName>
    </alternativeName>
    <alternativeName>
        <fullName>MIP224</fullName>
    </alternativeName>
    <alternativeName>
        <fullName>Proteasome 26S subunit ATPase 4</fullName>
    </alternativeName>
    <alternativeName>
        <fullName>Tat-binding protein 7</fullName>
        <shortName>TBP-7</shortName>
    </alternativeName>
</protein>
<gene>
    <name type="primary">PSMC4</name>
    <name type="synonym">MIP224</name>
    <name type="synonym">TBP7</name>
</gene>
<sequence length="418" mass="47366">MEEIGILVEKAQDEIPALSVSRPQTGLSFLGPEPEDLEDLYSRYKKLQQELEFLEVQEEYIKDEQKNLKKEFLHAQEEVKRIQSIPLVIGQFLEAVDQNTAIVGSTTGSNYYVRILSTIDRELLKPNASVALHKHSNALVDVLPPEADSSIMMLTSDQKPDVMYADIGGMDIQKQEVREAVELPLTHFELYKQIGIDPPRGVLMYGPPGCGKTMLAKAVAHHTTAAFIRVVGSEFVQKYLGEGPRMVRDVFRLAKENAPAIIFIDEIDAIATKRFDAQTGADREVQRILLELLNQMDGFDQNVNVKVIMATNRADTLDPALLRPGRLDRKIEFPLPDRRQKRLIFSTITSKMNLSEEVDLEDYVARPDKISGADINSICQESGMLAVRENRYIVLAKDFEKAYKTVIKKDEQEHEFYK</sequence>
<reference key="1">
    <citation type="journal article" date="1993" name="Proc. Natl. Acad. Sci. U.S.A.">
        <title>The type 1 human immunodeficiency virus Tat binding protein is a transcriptional activator belonging to an additional family of evolutionarily conserved genes.</title>
        <authorList>
            <person name="Ohana B."/>
            <person name="Moore P.A."/>
            <person name="Ruben S.M."/>
            <person name="Southgate C.D."/>
            <person name="Green M.R."/>
            <person name="Rosen C.A."/>
        </authorList>
    </citation>
    <scope>NUCLEOTIDE SEQUENCE [MRNA] (ISOFORM 1)</scope>
</reference>
<reference key="2">
    <citation type="journal article" date="2000" name="Genome Res.">
        <title>Cloning and functional analysis of cDNAs with open reading frames for 300 previously undefined genes expressed in CD34+ hematopoietic stem/progenitor cells.</title>
        <authorList>
            <person name="Zhang Q.-H."/>
            <person name="Ye M."/>
            <person name="Wu X.-Y."/>
            <person name="Ren S.-X."/>
            <person name="Zhao M."/>
            <person name="Zhao C.-J."/>
            <person name="Fu G."/>
            <person name="Shen Y."/>
            <person name="Fan H.-Y."/>
            <person name="Lu G."/>
            <person name="Zhong M."/>
            <person name="Xu X.-R."/>
            <person name="Han Z.-G."/>
            <person name="Zhang J.-W."/>
            <person name="Tao J."/>
            <person name="Huang Q.-H."/>
            <person name="Zhou J."/>
            <person name="Hu G.-X."/>
            <person name="Gu J."/>
            <person name="Chen S.-J."/>
            <person name="Chen Z."/>
        </authorList>
    </citation>
    <scope>NUCLEOTIDE SEQUENCE [LARGE SCALE MRNA] (ISOFORM 1)</scope>
    <source>
        <tissue>Umbilical cord blood</tissue>
    </source>
</reference>
<reference key="3">
    <citation type="journal article" date="1996" name="J. Steroid Biochem. Mol. Biol.">
        <title>A component of the 26S proteasome binds on orphan member of the nuclear hormone receptor superfamily.</title>
        <authorList>
            <person name="Choi H.S."/>
            <person name="Seol W."/>
            <person name="Moore D.D."/>
        </authorList>
    </citation>
    <scope>NUCLEOTIDE SEQUENCE [MRNA] (ISOFORM 1)</scope>
    <scope>INTERACTION WITH NR1I3</scope>
</reference>
<reference key="4">
    <citation type="submission" date="1998-08" db="EMBL/GenBank/DDBJ databases">
        <title>Cloning and expression analysis of a novel human gene homologous to mouse proteasomal ATPase (Tat-binding protein 7).</title>
        <authorList>
            <person name="Bi A."/>
            <person name="Yu L."/>
            <person name="Zheng L."/>
        </authorList>
    </citation>
    <scope>NUCLEOTIDE SEQUENCE [MRNA] (ISOFORM 1)</scope>
</reference>
<reference key="5">
    <citation type="submission" date="2003-05" db="EMBL/GenBank/DDBJ databases">
        <title>Cloning of human full-length CDSs in BD Creator(TM) system donor vector.</title>
        <authorList>
            <person name="Kalnine N."/>
            <person name="Chen X."/>
            <person name="Rolfs A."/>
            <person name="Halleck A."/>
            <person name="Hines L."/>
            <person name="Eisenstein S."/>
            <person name="Koundinya M."/>
            <person name="Raphael J."/>
            <person name="Moreira D."/>
            <person name="Kelley T."/>
            <person name="LaBaer J."/>
            <person name="Lin Y."/>
            <person name="Phelan M."/>
            <person name="Farmer A."/>
        </authorList>
    </citation>
    <scope>NUCLEOTIDE SEQUENCE [LARGE SCALE MRNA] (ISOFORM 1)</scope>
</reference>
<reference key="6">
    <citation type="journal article" date="2004" name="Nature">
        <title>The DNA sequence and biology of human chromosome 19.</title>
        <authorList>
            <person name="Grimwood J."/>
            <person name="Gordon L.A."/>
            <person name="Olsen A.S."/>
            <person name="Terry A."/>
            <person name="Schmutz J."/>
            <person name="Lamerdin J.E."/>
            <person name="Hellsten U."/>
            <person name="Goodstein D."/>
            <person name="Couronne O."/>
            <person name="Tran-Gyamfi M."/>
            <person name="Aerts A."/>
            <person name="Altherr M."/>
            <person name="Ashworth L."/>
            <person name="Bajorek E."/>
            <person name="Black S."/>
            <person name="Branscomb E."/>
            <person name="Caenepeel S."/>
            <person name="Carrano A.V."/>
            <person name="Caoile C."/>
            <person name="Chan Y.M."/>
            <person name="Christensen M."/>
            <person name="Cleland C.A."/>
            <person name="Copeland A."/>
            <person name="Dalin E."/>
            <person name="Dehal P."/>
            <person name="Denys M."/>
            <person name="Detter J.C."/>
            <person name="Escobar J."/>
            <person name="Flowers D."/>
            <person name="Fotopulos D."/>
            <person name="Garcia C."/>
            <person name="Georgescu A.M."/>
            <person name="Glavina T."/>
            <person name="Gomez M."/>
            <person name="Gonzales E."/>
            <person name="Groza M."/>
            <person name="Hammon N."/>
            <person name="Hawkins T."/>
            <person name="Haydu L."/>
            <person name="Ho I."/>
            <person name="Huang W."/>
            <person name="Israni S."/>
            <person name="Jett J."/>
            <person name="Kadner K."/>
            <person name="Kimball H."/>
            <person name="Kobayashi A."/>
            <person name="Larionov V."/>
            <person name="Leem S.-H."/>
            <person name="Lopez F."/>
            <person name="Lou Y."/>
            <person name="Lowry S."/>
            <person name="Malfatti S."/>
            <person name="Martinez D."/>
            <person name="McCready P.M."/>
            <person name="Medina C."/>
            <person name="Morgan J."/>
            <person name="Nelson K."/>
            <person name="Nolan M."/>
            <person name="Ovcharenko I."/>
            <person name="Pitluck S."/>
            <person name="Pollard M."/>
            <person name="Popkie A.P."/>
            <person name="Predki P."/>
            <person name="Quan G."/>
            <person name="Ramirez L."/>
            <person name="Rash S."/>
            <person name="Retterer J."/>
            <person name="Rodriguez A."/>
            <person name="Rogers S."/>
            <person name="Salamov A."/>
            <person name="Salazar A."/>
            <person name="She X."/>
            <person name="Smith D."/>
            <person name="Slezak T."/>
            <person name="Solovyev V."/>
            <person name="Thayer N."/>
            <person name="Tice H."/>
            <person name="Tsai M."/>
            <person name="Ustaszewska A."/>
            <person name="Vo N."/>
            <person name="Wagner M."/>
            <person name="Wheeler J."/>
            <person name="Wu K."/>
            <person name="Xie G."/>
            <person name="Yang J."/>
            <person name="Dubchak I."/>
            <person name="Furey T.S."/>
            <person name="DeJong P."/>
            <person name="Dickson M."/>
            <person name="Gordon D."/>
            <person name="Eichler E.E."/>
            <person name="Pennacchio L.A."/>
            <person name="Richardson P."/>
            <person name="Stubbs L."/>
            <person name="Rokhsar D.S."/>
            <person name="Myers R.M."/>
            <person name="Rubin E.M."/>
            <person name="Lucas S.M."/>
        </authorList>
    </citation>
    <scope>NUCLEOTIDE SEQUENCE [LARGE SCALE GENOMIC DNA]</scope>
</reference>
<reference key="7">
    <citation type="journal article" date="2004" name="Genome Res.">
        <title>The status, quality, and expansion of the NIH full-length cDNA project: the Mammalian Gene Collection (MGC).</title>
        <authorList>
            <consortium name="The MGC Project Team"/>
        </authorList>
    </citation>
    <scope>NUCLEOTIDE SEQUENCE [LARGE SCALE MRNA] (ISOFORMS 1 AND 2)</scope>
    <source>
        <tissue>Lung</tissue>
        <tissue>Pancreas</tissue>
        <tissue>Skin</tissue>
    </source>
</reference>
<reference key="8">
    <citation type="submission" date="2007-07" db="UniProtKB">
        <authorList>
            <person name="Bienvenut W.V."/>
            <person name="Boldt K."/>
            <person name="von Kriegsheim A.F."/>
            <person name="Kolch W."/>
        </authorList>
    </citation>
    <scope>PROTEIN SEQUENCE OF 1-10; 218-229; 307-313 AND 343-369</scope>
    <scope>ACETYLATION AT MET-1</scope>
    <scope>IDENTIFICATION BY MASS SPECTROMETRY</scope>
    <source>
        <tissue>Hepatoma</tissue>
    </source>
</reference>
<reference key="9">
    <citation type="journal article" date="1994" name="Biol. Chem. Hoppe-Seyler">
        <title>Tat-binding protein 7 is a subunit of the 26S protease.</title>
        <authorList>
            <person name="Dubiel W."/>
            <person name="Ferrell K."/>
            <person name="Rechsteiner M."/>
        </authorList>
    </citation>
    <scope>PARTIAL PROTEIN SEQUENCE</scope>
    <scope>FUNCTION</scope>
</reference>
<reference key="10">
    <citation type="journal article" date="1992" name="Eur. J. Biochem.">
        <title>Demonstration that a human 26S proteolytic complex consists of a proteasome and multiple associated protein components and hydrolyzes ATP and ubiquitin-ligated proteins by closely linked mechanisms.</title>
        <authorList>
            <person name="Kanayama H.O."/>
            <person name="Tamura T."/>
            <person name="Ugai S."/>
            <person name="Kagawa S."/>
            <person name="Tanahashi N."/>
            <person name="Yoshimura T."/>
            <person name="Tanaka K."/>
            <person name="Ichihara A."/>
        </authorList>
    </citation>
    <scope>FUNCTION</scope>
</reference>
<reference key="11">
    <citation type="journal article" date="2005" name="Mol. Cell. Biol.">
        <title>Proteasomal ATPase-associated factor 1 negatively regulates proteasome activity by interacting with proteasomal ATPases.</title>
        <authorList>
            <person name="Park Y."/>
            <person name="Hwang Y.-P."/>
            <person name="Lee J.-S."/>
            <person name="Seo S.-H."/>
            <person name="Yoon S.K."/>
            <person name="Yoon J.-B."/>
        </authorList>
    </citation>
    <scope>INTERACTION WITH PAAF1</scope>
</reference>
<reference key="12">
    <citation type="journal article" date="2007" name="Biochemistry">
        <title>Mass spectrometric characterization of the affinity-purified human 26S proteasome complex.</title>
        <authorList>
            <person name="Wang X."/>
            <person name="Chen C.-F."/>
            <person name="Baker P.R."/>
            <person name="Chen P.-L."/>
            <person name="Kaiser P."/>
            <person name="Huang L."/>
        </authorList>
    </citation>
    <scope>PHOSPHORYLATION [LARGE SCALE ANALYSIS] AT SER-28</scope>
    <scope>IDENTIFICATION BY MASS SPECTROMETRY [LARGE SCALE ANALYSIS]</scope>
    <source>
        <tissue>Embryonic kidney</tissue>
    </source>
</reference>
<reference key="13">
    <citation type="journal article" date="2008" name="Mol. Cell">
        <title>Kinase-selective enrichment enables quantitative phosphoproteomics of the kinome across the cell cycle.</title>
        <authorList>
            <person name="Daub H."/>
            <person name="Olsen J.V."/>
            <person name="Bairlein M."/>
            <person name="Gnad F."/>
            <person name="Oppermann F.S."/>
            <person name="Korner R."/>
            <person name="Greff Z."/>
            <person name="Keri G."/>
            <person name="Stemmann O."/>
            <person name="Mann M."/>
        </authorList>
    </citation>
    <scope>PHOSPHORYLATION [LARGE SCALE ANALYSIS] AT SER-28</scope>
    <scope>IDENTIFICATION BY MASS SPECTROMETRY [LARGE SCALE ANALYSIS]</scope>
    <source>
        <tissue>Cervix carcinoma</tissue>
    </source>
</reference>
<reference key="14">
    <citation type="journal article" date="2008" name="Proc. Natl. Acad. Sci. U.S.A.">
        <title>A quantitative atlas of mitotic phosphorylation.</title>
        <authorList>
            <person name="Dephoure N."/>
            <person name="Zhou C."/>
            <person name="Villen J."/>
            <person name="Beausoleil S.A."/>
            <person name="Bakalarski C.E."/>
            <person name="Elledge S.J."/>
            <person name="Gygi S.P."/>
        </authorList>
    </citation>
    <scope>PHOSPHORYLATION [LARGE SCALE ANALYSIS] AT SER-28</scope>
    <scope>IDENTIFICATION BY MASS SPECTROMETRY [LARGE SCALE ANALYSIS]</scope>
    <source>
        <tissue>Cervix carcinoma</tissue>
    </source>
</reference>
<reference key="15">
    <citation type="journal article" date="2009" name="Anal. Chem.">
        <title>Lys-N and trypsin cover complementary parts of the phosphoproteome in a refined SCX-based approach.</title>
        <authorList>
            <person name="Gauci S."/>
            <person name="Helbig A.O."/>
            <person name="Slijper M."/>
            <person name="Krijgsveld J."/>
            <person name="Heck A.J."/>
            <person name="Mohammed S."/>
        </authorList>
    </citation>
    <scope>ACETYLATION [LARGE SCALE ANALYSIS] AT MET-1</scope>
    <scope>IDENTIFICATION BY MASS SPECTROMETRY [LARGE SCALE ANALYSIS]</scope>
</reference>
<reference key="16">
    <citation type="journal article" date="2009" name="Sci. Signal.">
        <title>Quantitative phosphoproteomic analysis of T cell receptor signaling reveals system-wide modulation of protein-protein interactions.</title>
        <authorList>
            <person name="Mayya V."/>
            <person name="Lundgren D.H."/>
            <person name="Hwang S.-I."/>
            <person name="Rezaul K."/>
            <person name="Wu L."/>
            <person name="Eng J.K."/>
            <person name="Rodionov V."/>
            <person name="Han D.K."/>
        </authorList>
    </citation>
    <scope>PHOSPHORYLATION [LARGE SCALE ANALYSIS] AT SER-21 AND SER-28</scope>
    <scope>IDENTIFICATION BY MASS SPECTROMETRY [LARGE SCALE ANALYSIS]</scope>
    <source>
        <tissue>Leukemic T-cell</tissue>
    </source>
</reference>
<reference key="17">
    <citation type="journal article" date="2009" name="Science">
        <title>Lysine acetylation targets protein complexes and co-regulates major cellular functions.</title>
        <authorList>
            <person name="Choudhary C."/>
            <person name="Kumar C."/>
            <person name="Gnad F."/>
            <person name="Nielsen M.L."/>
            <person name="Rehman M."/>
            <person name="Walther T.C."/>
            <person name="Olsen J.V."/>
            <person name="Mann M."/>
        </authorList>
    </citation>
    <scope>ACETYLATION [LARGE SCALE ANALYSIS] AT LYS-397 AND LYS-401</scope>
    <scope>IDENTIFICATION BY MASS SPECTROMETRY [LARGE SCALE ANALYSIS]</scope>
</reference>
<reference key="18">
    <citation type="journal article" date="2010" name="Sci. Signal.">
        <title>Quantitative phosphoproteomics reveals widespread full phosphorylation site occupancy during mitosis.</title>
        <authorList>
            <person name="Olsen J.V."/>
            <person name="Vermeulen M."/>
            <person name="Santamaria A."/>
            <person name="Kumar C."/>
            <person name="Miller M.L."/>
            <person name="Jensen L.J."/>
            <person name="Gnad F."/>
            <person name="Cox J."/>
            <person name="Jensen T.S."/>
            <person name="Nigg E.A."/>
            <person name="Brunak S."/>
            <person name="Mann M."/>
        </authorList>
    </citation>
    <scope>PHOSPHORYLATION [LARGE SCALE ANALYSIS] AT SER-28</scope>
    <scope>IDENTIFICATION BY MASS SPECTROMETRY [LARGE SCALE ANALYSIS]</scope>
    <source>
        <tissue>Cervix carcinoma</tissue>
    </source>
</reference>
<reference key="19">
    <citation type="journal article" date="2011" name="BMC Syst. Biol.">
        <title>Initial characterization of the human central proteome.</title>
        <authorList>
            <person name="Burkard T.R."/>
            <person name="Planyavsky M."/>
            <person name="Kaupe I."/>
            <person name="Breitwieser F.P."/>
            <person name="Buerckstuemmer T."/>
            <person name="Bennett K.L."/>
            <person name="Superti-Furga G."/>
            <person name="Colinge J."/>
        </authorList>
    </citation>
    <scope>IDENTIFICATION BY MASS SPECTROMETRY [LARGE SCALE ANALYSIS]</scope>
</reference>
<reference key="20">
    <citation type="journal article" date="2011" name="Retrovirology">
        <title>TRIM5alpha associates with proteasomal subunits in cells while in complex with HIV-1 virions.</title>
        <authorList>
            <person name="Lukic Z."/>
            <person name="Hausmann S."/>
            <person name="Sebastian S."/>
            <person name="Rucci J."/>
            <person name="Sastri J."/>
            <person name="Robia S.L."/>
            <person name="Luban J."/>
            <person name="Campbell E.M."/>
        </authorList>
    </citation>
    <scope>INTERACTION WITH TRIM5</scope>
</reference>
<reference key="21">
    <citation type="journal article" date="2012" name="Mol. Cell. Proteomics">
        <title>Comparative large-scale characterisation of plant vs. mammal proteins reveals similar and idiosyncratic N-alpha acetylation features.</title>
        <authorList>
            <person name="Bienvenut W.V."/>
            <person name="Sumpton D."/>
            <person name="Martinez A."/>
            <person name="Lilla S."/>
            <person name="Espagne C."/>
            <person name="Meinnel T."/>
            <person name="Giglione C."/>
        </authorList>
    </citation>
    <scope>ACETYLATION [LARGE SCALE ANALYSIS] AT MET-1</scope>
    <scope>IDENTIFICATION BY MASS SPECTROMETRY [LARGE SCALE ANALYSIS]</scope>
</reference>
<reference key="22">
    <citation type="journal article" date="2012" name="Proc. Natl. Acad. Sci. U.S.A.">
        <title>N-terminal acetylome analyses and functional insights of the N-terminal acetyltransferase NatB.</title>
        <authorList>
            <person name="Van Damme P."/>
            <person name="Lasa M."/>
            <person name="Polevoda B."/>
            <person name="Gazquez C."/>
            <person name="Elosegui-Artola A."/>
            <person name="Kim D.S."/>
            <person name="De Juan-Pardo E."/>
            <person name="Demeyer K."/>
            <person name="Hole K."/>
            <person name="Larrea E."/>
            <person name="Timmerman E."/>
            <person name="Prieto J."/>
            <person name="Arnesen T."/>
            <person name="Sherman F."/>
            <person name="Gevaert K."/>
            <person name="Aldabe R."/>
        </authorList>
    </citation>
    <scope>ACETYLATION [LARGE SCALE ANALYSIS] AT MET-1</scope>
    <scope>IDENTIFICATION BY MASS SPECTROMETRY [LARGE SCALE ANALYSIS]</scope>
</reference>
<reference key="23">
    <citation type="journal article" date="2014" name="J. Proteomics">
        <title>An enzyme assisted RP-RPLC approach for in-depth analysis of human liver phosphoproteome.</title>
        <authorList>
            <person name="Bian Y."/>
            <person name="Song C."/>
            <person name="Cheng K."/>
            <person name="Dong M."/>
            <person name="Wang F."/>
            <person name="Huang J."/>
            <person name="Sun D."/>
            <person name="Wang L."/>
            <person name="Ye M."/>
            <person name="Zou H."/>
        </authorList>
    </citation>
    <scope>PHOSPHORYLATION [LARGE SCALE ANALYSIS] AT THR-25</scope>
    <scope>IDENTIFICATION BY MASS SPECTROMETRY [LARGE SCALE ANALYSIS]</scope>
    <source>
        <tissue>Liver</tissue>
    </source>
</reference>
<reference key="24">
    <citation type="journal article" date="2015" name="Proteomics">
        <title>N-terminome analysis of the human mitochondrial proteome.</title>
        <authorList>
            <person name="Vaca Jacome A.S."/>
            <person name="Rabilloud T."/>
            <person name="Schaeffer-Reiss C."/>
            <person name="Rompais M."/>
            <person name="Ayoub D."/>
            <person name="Lane L."/>
            <person name="Bairoch A."/>
            <person name="Van Dorsselaer A."/>
            <person name="Carapito C."/>
        </authorList>
    </citation>
    <scope>IDENTIFICATION BY MASS SPECTROMETRY [LARGE SCALE ANALYSIS]</scope>
</reference>
<reference key="25">
    <citation type="journal article" date="2018" name="Mol. Cell">
        <title>ZFAND1 recruits p97 and the 26S proteasome to promote the clearance of arsenite-induced stress granules.</title>
        <authorList>
            <person name="Turakhiya A."/>
            <person name="Meyer S.R."/>
            <person name="Marincola G."/>
            <person name="Boehm S."/>
            <person name="Vanselow J.T."/>
            <person name="Schlosser A."/>
            <person name="Hofmann K."/>
            <person name="Buchberger A."/>
        </authorList>
    </citation>
    <scope>INTERACTION WITH ZFAND1</scope>
</reference>
<reference key="26">
    <citation type="journal article" date="2007" name="Structure">
        <title>Structure of the oncoprotein gankyrin in complex with S6 ATPase of the 26S proteasome.</title>
        <authorList>
            <person name="Nakamura Y."/>
            <person name="Nakano K."/>
            <person name="Umehara T."/>
            <person name="Kimura M."/>
            <person name="Hayashizaki Y."/>
            <person name="Tanaka A."/>
            <person name="Horikoshi M."/>
            <person name="Padmanabhan B."/>
            <person name="Yokoyama S."/>
        </authorList>
    </citation>
    <scope>X-RAY CRYSTALLOGRAPHY (2.3 ANGSTROMS) OF 337-418 IN COMPLEX WITH MOUSE PSMD10</scope>
</reference>
<reference key="27">
    <citation type="journal article" date="2016" name="Nat. Struct. Mol. Biol.">
        <title>An atomic structure of the human 26S proteasome.</title>
        <authorList>
            <person name="Huang X."/>
            <person name="Luan B."/>
            <person name="Wu J."/>
            <person name="Shi Y."/>
        </authorList>
    </citation>
    <scope>STRUCTURE BY ELECTRON MICROSCOPY (3.50 ANGSTROMS) OF 1-440</scope>
    <scope>SUBUNIT</scope>
</reference>
<reference key="28">
    <citation type="journal article" date="2016" name="Proc. Natl. Acad. Sci. U.S.A.">
        <title>Structure of the human 26S proteasome at a resolution of 3.9 Aa.</title>
        <authorList>
            <person name="Schweitzer A."/>
            <person name="Aufderheide A."/>
            <person name="Rudack T."/>
            <person name="Beck F."/>
            <person name="Pfeifer G."/>
            <person name="Plitzko J.M."/>
            <person name="Sakata E."/>
            <person name="Schulten K."/>
            <person name="Foerster F."/>
            <person name="Baumeister W."/>
        </authorList>
    </citation>
    <scope>STRUCTURE BY ELECTRON MICROSCOPY (4.02 ANGSTROMS) OF 1-440</scope>
    <scope>SUBUNIT</scope>
</reference>
<proteinExistence type="evidence at protein level"/>